<comment type="function">
    <text evidence="2 3">Plays a role in the expression of late transcripts bridging viral DNA replication and late gene expression during infection (PubMed:21367901). Functions concordantly with UL87 to initiate transcription from over half of all active viral promoters in late infection, without affecting host transcription. Acts on and binds to viral early-late and late kinetic-class promoters (PubMed:34339482).</text>
</comment>
<comment type="subcellular location">
    <subcellularLocation>
        <location evidence="2 3">Host nucleus</location>
    </subcellularLocation>
    <text>Localizes in replication compartments during virus infection.</text>
</comment>
<comment type="similarity">
    <text evidence="4">Belongs to the herpesviridae UL79 family.</text>
</comment>
<dbReference type="EMBL" id="X17403">
    <property type="protein sequence ID" value="CAA35352.1"/>
    <property type="molecule type" value="Genomic_DNA"/>
</dbReference>
<dbReference type="EMBL" id="BK000394">
    <property type="protein sequence ID" value="DAA00175.1"/>
    <property type="molecule type" value="Genomic_DNA"/>
</dbReference>
<dbReference type="PIR" id="S09842">
    <property type="entry name" value="S09842"/>
</dbReference>
<dbReference type="Proteomes" id="UP000008991">
    <property type="component" value="Segment"/>
</dbReference>
<dbReference type="Proteomes" id="UP000008992">
    <property type="component" value="Segment"/>
</dbReference>
<dbReference type="GO" id="GO:0042025">
    <property type="term" value="C:host cell nucleus"/>
    <property type="evidence" value="ECO:0007669"/>
    <property type="project" value="UniProtKB-SubCell"/>
</dbReference>
<dbReference type="InterPro" id="IPR004290">
    <property type="entry name" value="Herpes_UL79"/>
</dbReference>
<dbReference type="Pfam" id="PF03049">
    <property type="entry name" value="Herpes_UL79"/>
    <property type="match status" value="1"/>
</dbReference>
<reference key="1">
    <citation type="journal article" date="1990" name="Curr. Top. Microbiol. Immunol.">
        <title>Analysis of the protein-coding content of the sequence of human cytomegalovirus strain AD169.</title>
        <authorList>
            <person name="Chee M.S."/>
            <person name="Bankier A.T."/>
            <person name="Beck S."/>
            <person name="Bohni R."/>
            <person name="Brown C.M."/>
            <person name="Cerny R."/>
            <person name="Horsnell T."/>
            <person name="Hutchison C.A. III"/>
            <person name="Kouzarides T."/>
            <person name="Martignetti J.A."/>
            <person name="Preddie E."/>
            <person name="Satchwell S.C."/>
            <person name="Tomlinson P."/>
            <person name="Weston K.M."/>
            <person name="Barrell B.G."/>
        </authorList>
    </citation>
    <scope>NUCLEOTIDE SEQUENCE [LARGE SCALE GENOMIC DNA]</scope>
</reference>
<reference key="2">
    <citation type="journal article" date="2003" name="J. Gen. Virol.">
        <title>The human cytomegalovirus genome revisited: comparison with the chimpanzee cytomegalovirus genome.</title>
        <authorList>
            <person name="Davison A.J."/>
            <person name="Dolan A."/>
            <person name="Akter P."/>
            <person name="Addison C."/>
            <person name="Dargan D.J."/>
            <person name="Alcendor D.J."/>
            <person name="McGeoch D.J."/>
            <person name="Hayward G.S."/>
        </authorList>
    </citation>
    <scope>GENOME REANNOTATION</scope>
</reference>
<reference key="3">
    <citation type="journal article" date="2003" name="J. Gen. Virol.">
        <authorList>
            <person name="Davison A.J."/>
            <person name="Dolan A."/>
            <person name="Akter P."/>
            <person name="Addison C."/>
            <person name="Dargan D.J."/>
            <person name="Alcendor D.J."/>
            <person name="McGeoch D.J."/>
            <person name="Hayward G.S."/>
        </authorList>
    </citation>
    <scope>ERRATUM OF PUBMED:12533697</scope>
</reference>
<reference key="4">
    <citation type="journal article" date="2004" name="J. Virol.">
        <title>Identification of proteins in human cytomegalovirus (HCMV) particles: the HCMV proteome.</title>
        <authorList>
            <person name="Varnum S.M."/>
            <person name="Streblow D.N."/>
            <person name="Monroe M.E."/>
            <person name="Smith P."/>
            <person name="Auberry K.J."/>
            <person name="Pasa-Tolic L."/>
            <person name="Wang D."/>
            <person name="Camp D.G. II"/>
            <person name="Rodland K."/>
            <person name="Wiley S."/>
            <person name="Britt W."/>
            <person name="Shenk T."/>
            <person name="Smith R.D."/>
            <person name="Nelson J.A."/>
        </authorList>
    </citation>
    <scope>IDENTIFICATION</scope>
</reference>
<reference key="5">
    <citation type="journal article" date="2004" name="J. Virol.">
        <authorList>
            <person name="Varnum S.M."/>
            <person name="Streblow D.N."/>
            <person name="Monroe M.E."/>
            <person name="Smith P."/>
            <person name="Auberry K.J."/>
            <person name="Pasa-Tolic L."/>
            <person name="Wang D."/>
            <person name="Camp D.G. II"/>
            <person name="Rodland K."/>
            <person name="Wiley S."/>
            <person name="Britt W."/>
            <person name="Shenk T."/>
            <person name="Smith R.D."/>
            <person name="Nelson J.A."/>
        </authorList>
    </citation>
    <scope>ERRATUM OF PUBMED:15452216</scope>
</reference>
<reference key="6">
    <citation type="journal article" date="2011" name="J. Virol.">
        <title>The human cytomegalovirus gene UL79 is required for the accumulation of late viral transcripts.</title>
        <authorList>
            <person name="Perng Y.C."/>
            <person name="Qian Z."/>
            <person name="Fehr A.R."/>
            <person name="Xuan B."/>
            <person name="Yu D."/>
        </authorList>
    </citation>
    <scope>FUNCTION</scope>
    <scope>SUBCELLULAR LOCATION</scope>
</reference>
<reference key="7">
    <citation type="journal article" date="2021" name="PLoS Pathog.">
        <title>Cytomegalovirus late transcription factor target sequence diversity orchestrates viral early to late transcription.</title>
        <authorList>
            <person name="Li M."/>
            <person name="Hu Q."/>
            <person name="Collins G."/>
            <person name="Parida M."/>
            <person name="Ball C.B."/>
            <person name="Price D.H."/>
            <person name="Meier J.L."/>
        </authorList>
    </citation>
    <scope>FUNCTION</scope>
    <scope>SUBCELLULAR LOCATION</scope>
</reference>
<evidence type="ECO:0000256" key="1">
    <source>
        <dbReference type="SAM" id="MobiDB-lite"/>
    </source>
</evidence>
<evidence type="ECO:0000269" key="2">
    <source>
    </source>
</evidence>
<evidence type="ECO:0000269" key="3">
    <source>
    </source>
</evidence>
<evidence type="ECO:0000305" key="4"/>
<name>UL79_HCMVA</name>
<accession>P16752</accession>
<accession>Q7M6L3</accession>
<proteinExistence type="inferred from homology"/>
<gene>
    <name type="primary">UL79</name>
</gene>
<protein>
    <recommendedName>
        <fullName>Protein UL79</fullName>
    </recommendedName>
</protein>
<organism>
    <name type="scientific">Human cytomegalovirus (strain AD169)</name>
    <name type="common">HHV-5</name>
    <name type="synonym">Human herpesvirus 5</name>
    <dbReference type="NCBI Taxonomy" id="10360"/>
    <lineage>
        <taxon>Viruses</taxon>
        <taxon>Duplodnaviria</taxon>
        <taxon>Heunggongvirae</taxon>
        <taxon>Peploviricota</taxon>
        <taxon>Herviviricetes</taxon>
        <taxon>Herpesvirales</taxon>
        <taxon>Orthoherpesviridae</taxon>
        <taxon>Betaherpesvirinae</taxon>
        <taxon>Cytomegalovirus</taxon>
        <taxon>Cytomegalovirus humanbeta5</taxon>
        <taxon>Human cytomegalovirus</taxon>
    </lineage>
</organism>
<keyword id="KW-1048">Host nucleus</keyword>
<keyword id="KW-1185">Reference proteome</keyword>
<organismHost>
    <name type="scientific">Homo sapiens</name>
    <name type="common">Human</name>
    <dbReference type="NCBI Taxonomy" id="9606"/>
</organismHost>
<sequence>MMARDEENPAVPRVRTGKFSFTCANHLILQISEKMSRGQPLSSLRLEELKIVRLICVLLFHRGLETLLLRETMNNLGVSDHAVLSRKTPQPYWPHLYRELRQAFPGLDFEAAVFDETRAARLSQRLCHPRLSGGLLTRFVQRHTGLPVVFPEDLARNGNILFSLGTLYGHRLFRLAAFFTRHWGAEAYEPLIRIICQKMWYFYLIGTGKMRITPDAFEIQRSRHETGIFTFIMEDYRTFAGTLSRHPHRPHPQQQQHHHPGPPHPPLSHPASSCLSPEAVLAARALHMPTLANDV</sequence>
<feature type="chain" id="PRO_0000116226" description="Protein UL79">
    <location>
        <begin position="1"/>
        <end position="295"/>
    </location>
</feature>
<feature type="region of interest" description="Disordered" evidence="1">
    <location>
        <begin position="243"/>
        <end position="273"/>
    </location>
</feature>
<feature type="compositionally biased region" description="Basic residues" evidence="1">
    <location>
        <begin position="245"/>
        <end position="261"/>
    </location>
</feature>